<protein>
    <recommendedName>
        <fullName evidence="5">NAC domain-containing protein 75</fullName>
        <shortName evidence="5">ANAC075</shortName>
    </recommendedName>
</protein>
<dbReference type="EMBL" id="AL161574">
    <property type="protein sequence ID" value="CAB79681.1"/>
    <property type="molecule type" value="Genomic_DNA"/>
</dbReference>
<dbReference type="EMBL" id="CP002687">
    <property type="protein sequence ID" value="AEE85605.1"/>
    <property type="molecule type" value="Genomic_DNA"/>
</dbReference>
<dbReference type="PIR" id="T13434">
    <property type="entry name" value="T13434"/>
</dbReference>
<dbReference type="RefSeq" id="NP_194652.1">
    <property type="nucleotide sequence ID" value="NM_119067.2"/>
</dbReference>
<dbReference type="SMR" id="Q9M0F8"/>
<dbReference type="FunCoup" id="Q9M0F8">
    <property type="interactions" value="486"/>
</dbReference>
<dbReference type="IntAct" id="Q9M0F8">
    <property type="interactions" value="1"/>
</dbReference>
<dbReference type="STRING" id="3702.Q9M0F8"/>
<dbReference type="PaxDb" id="3702-AT4G29230.1"/>
<dbReference type="ProteomicsDB" id="251235"/>
<dbReference type="EnsemblPlants" id="AT4G29230.1">
    <property type="protein sequence ID" value="AT4G29230.1"/>
    <property type="gene ID" value="AT4G29230"/>
</dbReference>
<dbReference type="GeneID" id="829044"/>
<dbReference type="Gramene" id="AT4G29230.1">
    <property type="protein sequence ID" value="AT4G29230.1"/>
    <property type="gene ID" value="AT4G29230"/>
</dbReference>
<dbReference type="KEGG" id="ath:AT4G29230"/>
<dbReference type="Araport" id="AT4G29230"/>
<dbReference type="TAIR" id="AT4G29230">
    <property type="gene designation" value="NAC075"/>
</dbReference>
<dbReference type="eggNOG" id="ENOG502QQ7W">
    <property type="taxonomic scope" value="Eukaryota"/>
</dbReference>
<dbReference type="HOGENOM" id="CLU_025101_3_0_1"/>
<dbReference type="InParanoid" id="Q9M0F8"/>
<dbReference type="OMA" id="EWMKYSS"/>
<dbReference type="PhylomeDB" id="Q9M0F8"/>
<dbReference type="PRO" id="PR:Q9M0F8"/>
<dbReference type="Proteomes" id="UP000006548">
    <property type="component" value="Chromosome 4"/>
</dbReference>
<dbReference type="ExpressionAtlas" id="Q9M0F8">
    <property type="expression patterns" value="baseline and differential"/>
</dbReference>
<dbReference type="GO" id="GO:0005634">
    <property type="term" value="C:nucleus"/>
    <property type="evidence" value="ECO:0007669"/>
    <property type="project" value="UniProtKB-SubCell"/>
</dbReference>
<dbReference type="GO" id="GO:0003700">
    <property type="term" value="F:DNA-binding transcription factor activity"/>
    <property type="evidence" value="ECO:0000250"/>
    <property type="project" value="TAIR"/>
</dbReference>
<dbReference type="GO" id="GO:0000976">
    <property type="term" value="F:transcription cis-regulatory region binding"/>
    <property type="evidence" value="ECO:0000353"/>
    <property type="project" value="TAIR"/>
</dbReference>
<dbReference type="GO" id="GO:0071555">
    <property type="term" value="P:cell wall organization"/>
    <property type="evidence" value="ECO:0007669"/>
    <property type="project" value="UniProtKB-KW"/>
</dbReference>
<dbReference type="GO" id="GO:0045893">
    <property type="term" value="P:positive regulation of DNA-templated transcription"/>
    <property type="evidence" value="ECO:0000314"/>
    <property type="project" value="UniProtKB"/>
</dbReference>
<dbReference type="GO" id="GO:0010321">
    <property type="term" value="P:regulation of vegetative phase change"/>
    <property type="evidence" value="ECO:0000315"/>
    <property type="project" value="TAIR"/>
</dbReference>
<dbReference type="GO" id="GO:1905177">
    <property type="term" value="P:tracheary element differentiation"/>
    <property type="evidence" value="ECO:0000315"/>
    <property type="project" value="UniProtKB"/>
</dbReference>
<dbReference type="FunFam" id="2.170.150.80:FF:000001">
    <property type="entry name" value="NAC domain-containing protein 73"/>
    <property type="match status" value="1"/>
</dbReference>
<dbReference type="Gene3D" id="2.170.150.80">
    <property type="entry name" value="NAC domain"/>
    <property type="match status" value="1"/>
</dbReference>
<dbReference type="InterPro" id="IPR003441">
    <property type="entry name" value="NAC-dom"/>
</dbReference>
<dbReference type="InterPro" id="IPR036093">
    <property type="entry name" value="NAC_dom_sf"/>
</dbReference>
<dbReference type="InterPro" id="IPR044799">
    <property type="entry name" value="SOG1-like"/>
</dbReference>
<dbReference type="PANTHER" id="PTHR31079">
    <property type="entry name" value="NAC DOMAIN-CONTAINING PROTEIN 73"/>
    <property type="match status" value="1"/>
</dbReference>
<dbReference type="PANTHER" id="PTHR31079:SF31">
    <property type="entry name" value="NAC DOMAIN-CONTAINING PROTEIN 75"/>
    <property type="match status" value="1"/>
</dbReference>
<dbReference type="Pfam" id="PF02365">
    <property type="entry name" value="NAM"/>
    <property type="match status" value="1"/>
</dbReference>
<dbReference type="SUPFAM" id="SSF101941">
    <property type="entry name" value="NAC domain"/>
    <property type="match status" value="1"/>
</dbReference>
<dbReference type="PROSITE" id="PS51005">
    <property type="entry name" value="NAC"/>
    <property type="match status" value="1"/>
</dbReference>
<name>NAC75_ARATH</name>
<proteinExistence type="evidence at transcript level"/>
<accession>Q9M0F8</accession>
<reference key="1">
    <citation type="journal article" date="1999" name="Nature">
        <title>Sequence and analysis of chromosome 4 of the plant Arabidopsis thaliana.</title>
        <authorList>
            <person name="Mayer K.F.X."/>
            <person name="Schueller C."/>
            <person name="Wambutt R."/>
            <person name="Murphy G."/>
            <person name="Volckaert G."/>
            <person name="Pohl T."/>
            <person name="Duesterhoeft A."/>
            <person name="Stiekema W."/>
            <person name="Entian K.-D."/>
            <person name="Terryn N."/>
            <person name="Harris B."/>
            <person name="Ansorge W."/>
            <person name="Brandt P."/>
            <person name="Grivell L.A."/>
            <person name="Rieger M."/>
            <person name="Weichselgartner M."/>
            <person name="de Simone V."/>
            <person name="Obermaier B."/>
            <person name="Mache R."/>
            <person name="Mueller M."/>
            <person name="Kreis M."/>
            <person name="Delseny M."/>
            <person name="Puigdomenech P."/>
            <person name="Watson M."/>
            <person name="Schmidtheini T."/>
            <person name="Reichert B."/>
            <person name="Portetelle D."/>
            <person name="Perez-Alonso M."/>
            <person name="Boutry M."/>
            <person name="Bancroft I."/>
            <person name="Vos P."/>
            <person name="Hoheisel J."/>
            <person name="Zimmermann W."/>
            <person name="Wedler H."/>
            <person name="Ridley P."/>
            <person name="Langham S.-A."/>
            <person name="McCullagh B."/>
            <person name="Bilham L."/>
            <person name="Robben J."/>
            <person name="van der Schueren J."/>
            <person name="Grymonprez B."/>
            <person name="Chuang Y.-J."/>
            <person name="Vandenbussche F."/>
            <person name="Braeken M."/>
            <person name="Weltjens I."/>
            <person name="Voet M."/>
            <person name="Bastiaens I."/>
            <person name="Aert R."/>
            <person name="Defoor E."/>
            <person name="Weitzenegger T."/>
            <person name="Bothe G."/>
            <person name="Ramsperger U."/>
            <person name="Hilbert H."/>
            <person name="Braun M."/>
            <person name="Holzer E."/>
            <person name="Brandt A."/>
            <person name="Peters S."/>
            <person name="van Staveren M."/>
            <person name="Dirkse W."/>
            <person name="Mooijman P."/>
            <person name="Klein Lankhorst R."/>
            <person name="Rose M."/>
            <person name="Hauf J."/>
            <person name="Koetter P."/>
            <person name="Berneiser S."/>
            <person name="Hempel S."/>
            <person name="Feldpausch M."/>
            <person name="Lamberth S."/>
            <person name="Van den Daele H."/>
            <person name="De Keyser A."/>
            <person name="Buysshaert C."/>
            <person name="Gielen J."/>
            <person name="Villarroel R."/>
            <person name="De Clercq R."/>
            <person name="van Montagu M."/>
            <person name="Rogers J."/>
            <person name="Cronin A."/>
            <person name="Quail M.A."/>
            <person name="Bray-Allen S."/>
            <person name="Clark L."/>
            <person name="Doggett J."/>
            <person name="Hall S."/>
            <person name="Kay M."/>
            <person name="Lennard N."/>
            <person name="McLay K."/>
            <person name="Mayes R."/>
            <person name="Pettett A."/>
            <person name="Rajandream M.A."/>
            <person name="Lyne M."/>
            <person name="Benes V."/>
            <person name="Rechmann S."/>
            <person name="Borkova D."/>
            <person name="Bloecker H."/>
            <person name="Scharfe M."/>
            <person name="Grimm M."/>
            <person name="Loehnert T.-H."/>
            <person name="Dose S."/>
            <person name="de Haan M."/>
            <person name="Maarse A.C."/>
            <person name="Schaefer M."/>
            <person name="Mueller-Auer S."/>
            <person name="Gabel C."/>
            <person name="Fuchs M."/>
            <person name="Fartmann B."/>
            <person name="Granderath K."/>
            <person name="Dauner D."/>
            <person name="Herzl A."/>
            <person name="Neumann S."/>
            <person name="Argiriou A."/>
            <person name="Vitale D."/>
            <person name="Liguori R."/>
            <person name="Piravandi E."/>
            <person name="Massenet O."/>
            <person name="Quigley F."/>
            <person name="Clabauld G."/>
            <person name="Muendlein A."/>
            <person name="Felber R."/>
            <person name="Schnabl S."/>
            <person name="Hiller R."/>
            <person name="Schmidt W."/>
            <person name="Lecharny A."/>
            <person name="Aubourg S."/>
            <person name="Chefdor F."/>
            <person name="Cooke R."/>
            <person name="Berger C."/>
            <person name="Monfort A."/>
            <person name="Casacuberta E."/>
            <person name="Gibbons T."/>
            <person name="Weber N."/>
            <person name="Vandenbol M."/>
            <person name="Bargues M."/>
            <person name="Terol J."/>
            <person name="Torres A."/>
            <person name="Perez-Perez A."/>
            <person name="Purnelle B."/>
            <person name="Bent E."/>
            <person name="Johnson S."/>
            <person name="Tacon D."/>
            <person name="Jesse T."/>
            <person name="Heijnen L."/>
            <person name="Schwarz S."/>
            <person name="Scholler P."/>
            <person name="Heber S."/>
            <person name="Francs P."/>
            <person name="Bielke C."/>
            <person name="Frishman D."/>
            <person name="Haase D."/>
            <person name="Lemcke K."/>
            <person name="Mewes H.-W."/>
            <person name="Stocker S."/>
            <person name="Zaccaria P."/>
            <person name="Bevan M."/>
            <person name="Wilson R.K."/>
            <person name="de la Bastide M."/>
            <person name="Habermann K."/>
            <person name="Parnell L."/>
            <person name="Dedhia N."/>
            <person name="Gnoj L."/>
            <person name="Schutz K."/>
            <person name="Huang E."/>
            <person name="Spiegel L."/>
            <person name="Sekhon M."/>
            <person name="Murray J."/>
            <person name="Sheet P."/>
            <person name="Cordes M."/>
            <person name="Abu-Threideh J."/>
            <person name="Stoneking T."/>
            <person name="Kalicki J."/>
            <person name="Graves T."/>
            <person name="Harmon G."/>
            <person name="Edwards J."/>
            <person name="Latreille P."/>
            <person name="Courtney L."/>
            <person name="Cloud J."/>
            <person name="Abbott A."/>
            <person name="Scott K."/>
            <person name="Johnson D."/>
            <person name="Minx P."/>
            <person name="Bentley D."/>
            <person name="Fulton B."/>
            <person name="Miller N."/>
            <person name="Greco T."/>
            <person name="Kemp K."/>
            <person name="Kramer J."/>
            <person name="Fulton L."/>
            <person name="Mardis E."/>
            <person name="Dante M."/>
            <person name="Pepin K."/>
            <person name="Hillier L.W."/>
            <person name="Nelson J."/>
            <person name="Spieth J."/>
            <person name="Ryan E."/>
            <person name="Andrews S."/>
            <person name="Geisel C."/>
            <person name="Layman D."/>
            <person name="Du H."/>
            <person name="Ali J."/>
            <person name="Berghoff A."/>
            <person name="Jones K."/>
            <person name="Drone K."/>
            <person name="Cotton M."/>
            <person name="Joshu C."/>
            <person name="Antonoiu B."/>
            <person name="Zidanic M."/>
            <person name="Strong C."/>
            <person name="Sun H."/>
            <person name="Lamar B."/>
            <person name="Yordan C."/>
            <person name="Ma P."/>
            <person name="Zhong J."/>
            <person name="Preston R."/>
            <person name="Vil D."/>
            <person name="Shekher M."/>
            <person name="Matero A."/>
            <person name="Shah R."/>
            <person name="Swaby I.K."/>
            <person name="O'Shaughnessy A."/>
            <person name="Rodriguez M."/>
            <person name="Hoffman J."/>
            <person name="Till S."/>
            <person name="Granat S."/>
            <person name="Shohdy N."/>
            <person name="Hasegawa A."/>
            <person name="Hameed A."/>
            <person name="Lodhi M."/>
            <person name="Johnson A."/>
            <person name="Chen E."/>
            <person name="Marra M.A."/>
            <person name="Martienssen R."/>
            <person name="McCombie W.R."/>
        </authorList>
    </citation>
    <scope>NUCLEOTIDE SEQUENCE [LARGE SCALE GENOMIC DNA]</scope>
    <source>
        <strain>cv. Columbia</strain>
    </source>
</reference>
<reference key="2">
    <citation type="journal article" date="2017" name="Plant J.">
        <title>Araport11: a complete reannotation of the Arabidopsis thaliana reference genome.</title>
        <authorList>
            <person name="Cheng C.Y."/>
            <person name="Krishnakumar V."/>
            <person name="Chan A.P."/>
            <person name="Thibaud-Nissen F."/>
            <person name="Schobel S."/>
            <person name="Town C.D."/>
        </authorList>
    </citation>
    <scope>GENOME REANNOTATION</scope>
    <source>
        <strain>cv. Columbia</strain>
    </source>
</reference>
<reference key="3">
    <citation type="journal article" date="2003" name="DNA Res.">
        <title>Comprehensive analysis of NAC family genes in Oryza sativa and Arabidopsis thaliana.</title>
        <authorList>
            <person name="Ooka H."/>
            <person name="Satoh K."/>
            <person name="Doi K."/>
            <person name="Nagata T."/>
            <person name="Otomo Y."/>
            <person name="Murakami K."/>
            <person name="Matsubara K."/>
            <person name="Osato N."/>
            <person name="Kawai J."/>
            <person name="Carninci P."/>
            <person name="Hayashizaki Y."/>
            <person name="Suzuki K."/>
            <person name="Kojima K."/>
            <person name="Takahara Y."/>
            <person name="Yamamoto K."/>
            <person name="Kikuchi S."/>
        </authorList>
    </citation>
    <scope>GENE FAMILY</scope>
    <scope>NOMENCLATURE</scope>
</reference>
<reference key="4">
    <citation type="journal article" date="2015" name="Plant Cell Physiol.">
        <title>Multiple classes of transcription factors regulate the expression of VASCULAR-RELATED NAC-DOMAIN7, a master switch of xylem vessel differentiation.</title>
        <authorList>
            <person name="Endo H."/>
            <person name="Yamaguchi M."/>
            <person name="Tamura T."/>
            <person name="Nakano Y."/>
            <person name="Nishikubo N."/>
            <person name="Yoneda A."/>
            <person name="Kato K."/>
            <person name="Kubo M."/>
            <person name="Kajita S."/>
            <person name="Katayama Y."/>
            <person name="Ohtani M."/>
            <person name="Demura T."/>
        </authorList>
    </citation>
    <scope>FUNCTION</scope>
    <scope>TISSUE SPECIFICITY</scope>
</reference>
<reference key="5">
    <citation type="journal article" date="2015" name="Plant Cell Physiol.">
        <title>Reconstitution of a secondary cell wall in a secondary cell wall-deficient Arabidopsis mutant.</title>
        <authorList>
            <person name="Sakamoto S."/>
            <person name="Mitsuda N."/>
        </authorList>
    </citation>
    <scope>FUNCTION</scope>
</reference>
<feature type="chain" id="PRO_0000442295" description="NAC domain-containing protein 75">
    <location>
        <begin position="1"/>
        <end position="498"/>
    </location>
</feature>
<feature type="domain" description="NAC" evidence="1">
    <location>
        <begin position="48"/>
        <end position="215"/>
    </location>
</feature>
<feature type="DNA-binding region" evidence="1">
    <location>
        <begin position="166"/>
        <end position="221"/>
    </location>
</feature>
<feature type="region of interest" description="Disordered" evidence="2">
    <location>
        <begin position="225"/>
        <end position="278"/>
    </location>
</feature>
<feature type="region of interest" description="Disordered" evidence="2">
    <location>
        <begin position="338"/>
        <end position="374"/>
    </location>
</feature>
<feature type="region of interest" description="Disordered" evidence="2">
    <location>
        <begin position="423"/>
        <end position="443"/>
    </location>
</feature>
<feature type="region of interest" description="Disordered" evidence="2">
    <location>
        <begin position="457"/>
        <end position="498"/>
    </location>
</feature>
<feature type="compositionally biased region" description="Gly residues" evidence="2">
    <location>
        <begin position="233"/>
        <end position="248"/>
    </location>
</feature>
<feature type="compositionally biased region" description="Low complexity" evidence="2">
    <location>
        <begin position="256"/>
        <end position="266"/>
    </location>
</feature>
<feature type="compositionally biased region" description="Basic residues" evidence="2">
    <location>
        <begin position="356"/>
        <end position="374"/>
    </location>
</feature>
<feature type="compositionally biased region" description="Polar residues" evidence="2">
    <location>
        <begin position="466"/>
        <end position="475"/>
    </location>
</feature>
<comment type="function">
    <text evidence="3 4">Transcription activator involved in xylem formation (PubMed:25265867, PubMed:25535195). Promotes the expression of the secondary wall-associated transcription factor MYB46 (PubMed:25265867). Functions upstream of NAC030/VND7, a master switch of xylem vessel differentiation (PubMed:25265867, PubMed:25535195). Acts as a upstream regulator of NAC101/VND6 and LBD30/ASL19 (PubMed:25535195).</text>
</comment>
<comment type="subcellular location">
    <subcellularLocation>
        <location evidence="1">Nucleus</location>
    </subcellularLocation>
</comment>
<comment type="tissue specificity">
    <text evidence="3">Expressed in the vascular cylinder of roots. Expressed in the differentiation zone of the root stele.</text>
</comment>
<comment type="domain">
    <text evidence="1">The NAC domain includes a DNA binding domain and a dimerization domain.</text>
</comment>
<comment type="miscellaneous">
    <text evidence="3 4">Overexpression of NAC075 induces the formation of ectopic xylem vessel-like elements.</text>
</comment>
<gene>
    <name evidence="5" type="primary">NAC075</name>
    <name evidence="6" type="ordered locus">At4g29230</name>
</gene>
<organism>
    <name type="scientific">Arabidopsis thaliana</name>
    <name type="common">Mouse-ear cress</name>
    <dbReference type="NCBI Taxonomy" id="3702"/>
    <lineage>
        <taxon>Eukaryota</taxon>
        <taxon>Viridiplantae</taxon>
        <taxon>Streptophyta</taxon>
        <taxon>Embryophyta</taxon>
        <taxon>Tracheophyta</taxon>
        <taxon>Spermatophyta</taxon>
        <taxon>Magnoliopsida</taxon>
        <taxon>eudicotyledons</taxon>
        <taxon>Gunneridae</taxon>
        <taxon>Pentapetalae</taxon>
        <taxon>rosids</taxon>
        <taxon>malvids</taxon>
        <taxon>Brassicales</taxon>
        <taxon>Brassicaceae</taxon>
        <taxon>Camelineae</taxon>
        <taxon>Arabidopsis</taxon>
    </lineage>
</organism>
<sequence>MNKSNPAGSVTGSDIIDAKIEEHQLCGSKKCPSCGHKLEGKPQDWVGLPAGVKFDPTDQELIEHLEAKVLAKDFKSHPLIDEFIPTIEGEDGICYTHPEKLPGVTRDGLSRHFFHRPSKAYTTGTRKRRKIQTECDNNLQGSSSSGETRWHKTGKTRPVMVNGKQKGCKKILVLYTNFGKNRKPEKTNWVMHQYHLGTHEEEKEGELVVSKIFYQTQPRQCNWSSSTSSLNAIGGGGGEASSGGGGGEYHMRRDSGTTSGGSCSSSREIINVNPPNRSDEIGGVGGGVMAVAAAAAAVAAGLPSYAMDQLSFVPFMKSFDEVARRETPQTGHATCEDVMAEQHRHRHQPSSSTSHHMAHDHHHHHHQQQQQRHHAFNISQPTHPISTIISPSTSLHHASINILDDNPYHVHRILLPNENYQTQQQLRQEGEEEHNDGKMGGRSASGLEELIMGCTSSTTHHDVKDGSSSMGNQQEAEWLKYSTFWPAPDSSDNQDHHG</sequence>
<evidence type="ECO:0000255" key="1">
    <source>
        <dbReference type="PROSITE-ProRule" id="PRU00353"/>
    </source>
</evidence>
<evidence type="ECO:0000256" key="2">
    <source>
        <dbReference type="SAM" id="MobiDB-lite"/>
    </source>
</evidence>
<evidence type="ECO:0000269" key="3">
    <source>
    </source>
</evidence>
<evidence type="ECO:0000269" key="4">
    <source>
    </source>
</evidence>
<evidence type="ECO:0000303" key="5">
    <source>
    </source>
</evidence>
<evidence type="ECO:0000312" key="6">
    <source>
        <dbReference type="Araport" id="AT4G29230"/>
    </source>
</evidence>
<keyword id="KW-0010">Activator</keyword>
<keyword id="KW-0961">Cell wall biogenesis/degradation</keyword>
<keyword id="KW-0217">Developmental protein</keyword>
<keyword id="KW-0238">DNA-binding</keyword>
<keyword id="KW-0539">Nucleus</keyword>
<keyword id="KW-1185">Reference proteome</keyword>
<keyword id="KW-0804">Transcription</keyword>
<keyword id="KW-0805">Transcription regulation</keyword>